<gene>
    <name evidence="1" type="primary">murA</name>
    <name type="ordered locus">IL0409</name>
</gene>
<keyword id="KW-0131">Cell cycle</keyword>
<keyword id="KW-0132">Cell division</keyword>
<keyword id="KW-0133">Cell shape</keyword>
<keyword id="KW-0961">Cell wall biogenesis/degradation</keyword>
<keyword id="KW-0963">Cytoplasm</keyword>
<keyword id="KW-0573">Peptidoglycan synthesis</keyword>
<keyword id="KW-0670">Pyruvate</keyword>
<keyword id="KW-1185">Reference proteome</keyword>
<keyword id="KW-0808">Transferase</keyword>
<accession>Q5R0J5</accession>
<protein>
    <recommendedName>
        <fullName evidence="1">UDP-N-acetylglucosamine 1-carboxyvinyltransferase</fullName>
        <ecNumber evidence="1">2.5.1.7</ecNumber>
    </recommendedName>
    <alternativeName>
        <fullName evidence="1">Enoylpyruvate transferase</fullName>
    </alternativeName>
    <alternativeName>
        <fullName evidence="1">UDP-N-acetylglucosamine enolpyruvyl transferase</fullName>
        <shortName evidence="1">EPT</shortName>
    </alternativeName>
</protein>
<sequence length="419" mass="44338">MDKFKIRGGQPLSGSVTISGAKNAALPILMASLLPSEKITLSNVPDLHDVDTTLELLDCLGISHSNLNNNSVCIDPTTLNHFKAPYDLVKTMRASILVLGPLLAKTGKAEVSLPGGCAIGARPVNLHIEGLRKMGAHIDVENGYIKASVEGRLQGAEILLDTVSVTGTENLMMAAVLAEGETVIENAAREPEVIDLANFLNSLGANVRDAGSDTIHITGVNKLHGGEYSVMPDRIETGTFLVAALATGGSVRCEKTDPASLDAVLKKLEEAGATIDKGDNWIAIQSHGRPKAVNIITAPHPAFPTDMQAQFCALNAIAEGTAGIRETIFENRFMHIPELRRMGANVESEGNTALCHGVDELTGAEVMCTDLRASASLVIAGLVATGETVVERIYHIDRGYEGIEKKLQGLGADIERVTA</sequence>
<proteinExistence type="inferred from homology"/>
<feature type="chain" id="PRO_0000231213" description="UDP-N-acetylglucosamine 1-carboxyvinyltransferase">
    <location>
        <begin position="1"/>
        <end position="419"/>
    </location>
</feature>
<feature type="active site" description="Proton donor" evidence="1">
    <location>
        <position position="117"/>
    </location>
</feature>
<feature type="binding site" evidence="1">
    <location>
        <begin position="22"/>
        <end position="23"/>
    </location>
    <ligand>
        <name>phosphoenolpyruvate</name>
        <dbReference type="ChEBI" id="CHEBI:58702"/>
    </ligand>
</feature>
<feature type="binding site" evidence="1">
    <location>
        <position position="93"/>
    </location>
    <ligand>
        <name>UDP-N-acetyl-alpha-D-glucosamine</name>
        <dbReference type="ChEBI" id="CHEBI:57705"/>
    </ligand>
</feature>
<feature type="binding site" evidence="1">
    <location>
        <position position="306"/>
    </location>
    <ligand>
        <name>UDP-N-acetyl-alpha-D-glucosamine</name>
        <dbReference type="ChEBI" id="CHEBI:57705"/>
    </ligand>
</feature>
<feature type="binding site" evidence="1">
    <location>
        <position position="328"/>
    </location>
    <ligand>
        <name>UDP-N-acetyl-alpha-D-glucosamine</name>
        <dbReference type="ChEBI" id="CHEBI:57705"/>
    </ligand>
</feature>
<feature type="modified residue" description="2-(S-cysteinyl)pyruvic acid O-phosphothioketal" evidence="1">
    <location>
        <position position="117"/>
    </location>
</feature>
<comment type="function">
    <text evidence="1">Cell wall formation. Adds enolpyruvyl to UDP-N-acetylglucosamine.</text>
</comment>
<comment type="catalytic activity">
    <reaction evidence="1">
        <text>phosphoenolpyruvate + UDP-N-acetyl-alpha-D-glucosamine = UDP-N-acetyl-3-O-(1-carboxyvinyl)-alpha-D-glucosamine + phosphate</text>
        <dbReference type="Rhea" id="RHEA:18681"/>
        <dbReference type="ChEBI" id="CHEBI:43474"/>
        <dbReference type="ChEBI" id="CHEBI:57705"/>
        <dbReference type="ChEBI" id="CHEBI:58702"/>
        <dbReference type="ChEBI" id="CHEBI:68483"/>
        <dbReference type="EC" id="2.5.1.7"/>
    </reaction>
</comment>
<comment type="pathway">
    <text evidence="1">Cell wall biogenesis; peptidoglycan biosynthesis.</text>
</comment>
<comment type="subcellular location">
    <subcellularLocation>
        <location evidence="1">Cytoplasm</location>
    </subcellularLocation>
</comment>
<comment type="similarity">
    <text evidence="1">Belongs to the EPSP synthase family. MurA subfamily.</text>
</comment>
<organism>
    <name type="scientific">Idiomarina loihiensis (strain ATCC BAA-735 / DSM 15497 / L2-TR)</name>
    <dbReference type="NCBI Taxonomy" id="283942"/>
    <lineage>
        <taxon>Bacteria</taxon>
        <taxon>Pseudomonadati</taxon>
        <taxon>Pseudomonadota</taxon>
        <taxon>Gammaproteobacteria</taxon>
        <taxon>Alteromonadales</taxon>
        <taxon>Idiomarinaceae</taxon>
        <taxon>Idiomarina</taxon>
    </lineage>
</organism>
<name>MURA_IDILO</name>
<reference key="1">
    <citation type="journal article" date="2004" name="Proc. Natl. Acad. Sci. U.S.A.">
        <title>Genome sequence of the deep-sea gamma-proteobacterium Idiomarina loihiensis reveals amino acid fermentation as a source of carbon and energy.</title>
        <authorList>
            <person name="Hou S."/>
            <person name="Saw J.H."/>
            <person name="Lee K.S."/>
            <person name="Freitas T.A."/>
            <person name="Belisle C."/>
            <person name="Kawarabayasi Y."/>
            <person name="Donachie S.P."/>
            <person name="Pikina A."/>
            <person name="Galperin M.Y."/>
            <person name="Koonin E.V."/>
            <person name="Makarova K.S."/>
            <person name="Omelchenko M.V."/>
            <person name="Sorokin A."/>
            <person name="Wolf Y.I."/>
            <person name="Li Q.X."/>
            <person name="Keum Y.S."/>
            <person name="Campbell S."/>
            <person name="Denery J."/>
            <person name="Aizawa S."/>
            <person name="Shibata S."/>
            <person name="Malahoff A."/>
            <person name="Alam M."/>
        </authorList>
    </citation>
    <scope>NUCLEOTIDE SEQUENCE [LARGE SCALE GENOMIC DNA]</scope>
    <source>
        <strain>ATCC BAA-735 / DSM 15497 / L2-TR</strain>
    </source>
</reference>
<evidence type="ECO:0000255" key="1">
    <source>
        <dbReference type="HAMAP-Rule" id="MF_00111"/>
    </source>
</evidence>
<dbReference type="EC" id="2.5.1.7" evidence="1"/>
<dbReference type="EMBL" id="AE017340">
    <property type="protein sequence ID" value="AAV81252.1"/>
    <property type="molecule type" value="Genomic_DNA"/>
</dbReference>
<dbReference type="RefSeq" id="WP_011233670.1">
    <property type="nucleotide sequence ID" value="NC_006512.1"/>
</dbReference>
<dbReference type="SMR" id="Q5R0J5"/>
<dbReference type="STRING" id="283942.IL0409"/>
<dbReference type="GeneID" id="41335561"/>
<dbReference type="KEGG" id="ilo:IL0409"/>
<dbReference type="eggNOG" id="COG0766">
    <property type="taxonomic scope" value="Bacteria"/>
</dbReference>
<dbReference type="HOGENOM" id="CLU_027387_0_0_6"/>
<dbReference type="OrthoDB" id="9803760at2"/>
<dbReference type="UniPathway" id="UPA00219"/>
<dbReference type="Proteomes" id="UP000001171">
    <property type="component" value="Chromosome"/>
</dbReference>
<dbReference type="GO" id="GO:0005737">
    <property type="term" value="C:cytoplasm"/>
    <property type="evidence" value="ECO:0007669"/>
    <property type="project" value="UniProtKB-SubCell"/>
</dbReference>
<dbReference type="GO" id="GO:0008760">
    <property type="term" value="F:UDP-N-acetylglucosamine 1-carboxyvinyltransferase activity"/>
    <property type="evidence" value="ECO:0007669"/>
    <property type="project" value="UniProtKB-UniRule"/>
</dbReference>
<dbReference type="GO" id="GO:0051301">
    <property type="term" value="P:cell division"/>
    <property type="evidence" value="ECO:0007669"/>
    <property type="project" value="UniProtKB-KW"/>
</dbReference>
<dbReference type="GO" id="GO:0071555">
    <property type="term" value="P:cell wall organization"/>
    <property type="evidence" value="ECO:0007669"/>
    <property type="project" value="UniProtKB-KW"/>
</dbReference>
<dbReference type="GO" id="GO:0009252">
    <property type="term" value="P:peptidoglycan biosynthetic process"/>
    <property type="evidence" value="ECO:0007669"/>
    <property type="project" value="UniProtKB-UniRule"/>
</dbReference>
<dbReference type="GO" id="GO:0008360">
    <property type="term" value="P:regulation of cell shape"/>
    <property type="evidence" value="ECO:0007669"/>
    <property type="project" value="UniProtKB-KW"/>
</dbReference>
<dbReference type="GO" id="GO:0019277">
    <property type="term" value="P:UDP-N-acetylgalactosamine biosynthetic process"/>
    <property type="evidence" value="ECO:0007669"/>
    <property type="project" value="InterPro"/>
</dbReference>
<dbReference type="CDD" id="cd01555">
    <property type="entry name" value="UdpNAET"/>
    <property type="match status" value="1"/>
</dbReference>
<dbReference type="FunFam" id="3.65.10.10:FF:000001">
    <property type="entry name" value="UDP-N-acetylglucosamine 1-carboxyvinyltransferase"/>
    <property type="match status" value="1"/>
</dbReference>
<dbReference type="Gene3D" id="3.65.10.10">
    <property type="entry name" value="Enolpyruvate transferase domain"/>
    <property type="match status" value="2"/>
</dbReference>
<dbReference type="HAMAP" id="MF_00111">
    <property type="entry name" value="MurA"/>
    <property type="match status" value="1"/>
</dbReference>
<dbReference type="InterPro" id="IPR001986">
    <property type="entry name" value="Enolpyruvate_Tfrase_dom"/>
</dbReference>
<dbReference type="InterPro" id="IPR036968">
    <property type="entry name" value="Enolpyruvate_Tfrase_sf"/>
</dbReference>
<dbReference type="InterPro" id="IPR050068">
    <property type="entry name" value="MurA_subfamily"/>
</dbReference>
<dbReference type="InterPro" id="IPR013792">
    <property type="entry name" value="RNA3'P_cycl/enolpyr_Trfase_a/b"/>
</dbReference>
<dbReference type="InterPro" id="IPR005750">
    <property type="entry name" value="UDP_GlcNAc_COvinyl_MurA"/>
</dbReference>
<dbReference type="NCBIfam" id="TIGR01072">
    <property type="entry name" value="murA"/>
    <property type="match status" value="1"/>
</dbReference>
<dbReference type="NCBIfam" id="NF006873">
    <property type="entry name" value="PRK09369.1"/>
    <property type="match status" value="1"/>
</dbReference>
<dbReference type="PANTHER" id="PTHR43783">
    <property type="entry name" value="UDP-N-ACETYLGLUCOSAMINE 1-CARBOXYVINYLTRANSFERASE"/>
    <property type="match status" value="1"/>
</dbReference>
<dbReference type="PANTHER" id="PTHR43783:SF1">
    <property type="entry name" value="UDP-N-ACETYLGLUCOSAMINE 1-CARBOXYVINYLTRANSFERASE"/>
    <property type="match status" value="1"/>
</dbReference>
<dbReference type="Pfam" id="PF00275">
    <property type="entry name" value="EPSP_synthase"/>
    <property type="match status" value="1"/>
</dbReference>
<dbReference type="SUPFAM" id="SSF55205">
    <property type="entry name" value="EPT/RTPC-like"/>
    <property type="match status" value="1"/>
</dbReference>